<gene>
    <name evidence="2" type="primary">dbo</name>
    <name type="ORF">GD14575</name>
</gene>
<evidence type="ECO:0000250" key="1"/>
<evidence type="ECO:0000250" key="2">
    <source>
        <dbReference type="UniProtKB" id="Q9VUU5"/>
    </source>
</evidence>
<evidence type="ECO:0000250" key="3">
    <source>
        <dbReference type="UniProtKB" id="Q9Y2M5"/>
    </source>
</evidence>
<evidence type="ECO:0000255" key="4"/>
<evidence type="ECO:0000255" key="5">
    <source>
        <dbReference type="PROSITE-ProRule" id="PRU00037"/>
    </source>
</evidence>
<evidence type="ECO:0000256" key="6">
    <source>
        <dbReference type="SAM" id="MobiDB-lite"/>
    </source>
</evidence>
<evidence type="ECO:0000312" key="7">
    <source>
        <dbReference type="EMBL" id="EDX10601.1"/>
    </source>
</evidence>
<protein>
    <recommendedName>
        <fullName evidence="2">Kelch-like protein diablo</fullName>
    </recommendedName>
</protein>
<sequence>MGDLPGSGSTAQPRDAAVTGTGGNSTAGGGSSVGSTAVDRPPSPARLSHTSEKHPKVTLTELNMLRRHRELCDVVLNVGGRKIFAHRVILSACSSYFCAMFTGELEESRQTEVTIRDIDENAMELLIDFCYTAHIIVEESNVQTLLPAACLLQLVEIQDICCEFLKRQLDPTNCLGIRAFADTHSCRELLRIADKFTQHNFQEVMESEEFLLLPVGQLVDIICSDELNVRSEEQVFNAVMSWLKYNVAERRQHLAQVLQHVRLPLLSPKFLVGTVGSDLLVRSDEACRDLVDEAKNYLLLPQERPLMQGPRTRPRKPTRRGEVLFAVGGWCSGDAIASVERFDPQTNDWKMVAPMSKRRCGVGVAVLNDLLYAVGGHDGQSYLNSIERYDPQTNQWSCDVAPTTSCRTSVGVAVLDEFLYAVGGQDGVQCLNHVERYDPKENKWSKVAPMTTRRLGVAVAVLGGFLYAIGGSDGQCPLNTVERYDPRHNKWVAVSPMSTRRKHLGCAVFNNYIYAVGGRDDCMELSSAERYNPLTNTWSPIVAMTSRRSGVGLAVVNGQLYAVGGFDGSAYLKTIEVYDPETNQWRLCGCMNYRRLGGGVGVMRAPQTENYMWCENSFKQPNS</sequence>
<feature type="chain" id="PRO_0000379953" description="Kelch-like protein diablo">
    <location>
        <begin position="1"/>
        <end position="623"/>
    </location>
</feature>
<feature type="domain" description="BTB" evidence="5">
    <location>
        <begin position="72"/>
        <end position="139"/>
    </location>
</feature>
<feature type="domain" description="BACK" evidence="4">
    <location>
        <begin position="174"/>
        <end position="276"/>
    </location>
</feature>
<feature type="repeat" description="Kelch 1" evidence="4">
    <location>
        <begin position="323"/>
        <end position="369"/>
    </location>
</feature>
<feature type="repeat" description="Kelch 2" evidence="4">
    <location>
        <begin position="371"/>
        <end position="417"/>
    </location>
</feature>
<feature type="repeat" description="Kelch 3" evidence="4">
    <location>
        <begin position="418"/>
        <end position="464"/>
    </location>
</feature>
<feature type="repeat" description="Kelch 4" evidence="4">
    <location>
        <begin position="466"/>
        <end position="511"/>
    </location>
</feature>
<feature type="repeat" description="Kelch 5" evidence="4">
    <location>
        <begin position="513"/>
        <end position="558"/>
    </location>
</feature>
<feature type="repeat" description="Kelch 6" evidence="4">
    <location>
        <begin position="559"/>
        <end position="605"/>
    </location>
</feature>
<feature type="region of interest" description="Disordered" evidence="6">
    <location>
        <begin position="1"/>
        <end position="54"/>
    </location>
</feature>
<feature type="compositionally biased region" description="Gly residues" evidence="6">
    <location>
        <begin position="20"/>
        <end position="32"/>
    </location>
</feature>
<feature type="modified residue" description="Phosphothreonine" evidence="1">
    <location>
        <position position="19"/>
    </location>
</feature>
<dbReference type="EMBL" id="CM000363">
    <property type="protein sequence ID" value="EDX10601.1"/>
    <property type="molecule type" value="Genomic_DNA"/>
</dbReference>
<dbReference type="SMR" id="B4QLQ2"/>
<dbReference type="STRING" id="7240.B4QLQ2"/>
<dbReference type="EnsemblMetazoa" id="FBtr0354299">
    <property type="protein sequence ID" value="FBpp0318704"/>
    <property type="gene ID" value="FBgn0186255"/>
</dbReference>
<dbReference type="EnsemblMetazoa" id="XM_016171543.3">
    <property type="protein sequence ID" value="XP_016032031.1"/>
    <property type="gene ID" value="LOC6738203"/>
</dbReference>
<dbReference type="GeneID" id="6738203"/>
<dbReference type="CTD" id="53556"/>
<dbReference type="HOGENOM" id="CLU_004253_14_2_1"/>
<dbReference type="OMA" id="CAVFNNL"/>
<dbReference type="OrthoDB" id="45365at2759"/>
<dbReference type="PhylomeDB" id="B4QLQ2"/>
<dbReference type="UniPathway" id="UPA00143"/>
<dbReference type="Proteomes" id="UP000000304">
    <property type="component" value="Chromosome 3L"/>
</dbReference>
<dbReference type="Bgee" id="FBgn0186255">
    <property type="expression patterns" value="Expressed in embryo and 3 other cell types or tissues"/>
</dbReference>
<dbReference type="GO" id="GO:0031463">
    <property type="term" value="C:Cul3-RING ubiquitin ligase complex"/>
    <property type="evidence" value="ECO:0007669"/>
    <property type="project" value="EnsemblMetazoa"/>
</dbReference>
<dbReference type="GO" id="GO:0003779">
    <property type="term" value="F:actin binding"/>
    <property type="evidence" value="ECO:0007669"/>
    <property type="project" value="UniProtKB-KW"/>
</dbReference>
<dbReference type="GO" id="GO:1990756">
    <property type="term" value="F:ubiquitin-like ligase-substrate adaptor activity"/>
    <property type="evidence" value="ECO:0007669"/>
    <property type="project" value="EnsemblMetazoa"/>
</dbReference>
<dbReference type="GO" id="GO:0045886">
    <property type="term" value="P:negative regulation of synaptic assembly at neuromuscular junction"/>
    <property type="evidence" value="ECO:0000250"/>
    <property type="project" value="UniProtKB"/>
</dbReference>
<dbReference type="GO" id="GO:0043161">
    <property type="term" value="P:proteasome-mediated ubiquitin-dependent protein catabolic process"/>
    <property type="evidence" value="ECO:0007669"/>
    <property type="project" value="EnsemblMetazoa"/>
</dbReference>
<dbReference type="GO" id="GO:0016567">
    <property type="term" value="P:protein ubiquitination"/>
    <property type="evidence" value="ECO:0007669"/>
    <property type="project" value="UniProtKB-UniPathway"/>
</dbReference>
<dbReference type="CDD" id="cd18459">
    <property type="entry name" value="BACK_KLHL20"/>
    <property type="match status" value="1"/>
</dbReference>
<dbReference type="CDD" id="cd18249">
    <property type="entry name" value="BTB_POZ_KLHL20_KLEIP"/>
    <property type="match status" value="1"/>
</dbReference>
<dbReference type="FunFam" id="1.25.40.420:FF:000001">
    <property type="entry name" value="Kelch-like family member 12"/>
    <property type="match status" value="1"/>
</dbReference>
<dbReference type="FunFam" id="2.120.10.80:FF:000006">
    <property type="entry name" value="Kelch-like family member 20"/>
    <property type="match status" value="1"/>
</dbReference>
<dbReference type="FunFam" id="3.30.710.10:FF:000001">
    <property type="entry name" value="Kelch-like family member 20"/>
    <property type="match status" value="1"/>
</dbReference>
<dbReference type="Gene3D" id="1.25.40.420">
    <property type="match status" value="1"/>
</dbReference>
<dbReference type="Gene3D" id="2.120.10.80">
    <property type="entry name" value="Kelch-type beta propeller"/>
    <property type="match status" value="1"/>
</dbReference>
<dbReference type="Gene3D" id="3.30.710.10">
    <property type="entry name" value="Potassium Channel Kv1.1, Chain A"/>
    <property type="match status" value="1"/>
</dbReference>
<dbReference type="InterPro" id="IPR011705">
    <property type="entry name" value="BACK"/>
</dbReference>
<dbReference type="InterPro" id="IPR017096">
    <property type="entry name" value="BTB-kelch_protein"/>
</dbReference>
<dbReference type="InterPro" id="IPR000210">
    <property type="entry name" value="BTB/POZ_dom"/>
</dbReference>
<dbReference type="InterPro" id="IPR011043">
    <property type="entry name" value="Gal_Oxase/kelch_b-propeller"/>
</dbReference>
<dbReference type="InterPro" id="IPR015915">
    <property type="entry name" value="Kelch-typ_b-propeller"/>
</dbReference>
<dbReference type="InterPro" id="IPR006652">
    <property type="entry name" value="Kelch_1"/>
</dbReference>
<dbReference type="InterPro" id="IPR011333">
    <property type="entry name" value="SKP1/BTB/POZ_sf"/>
</dbReference>
<dbReference type="PANTHER" id="PTHR24412">
    <property type="entry name" value="KELCH PROTEIN"/>
    <property type="match status" value="1"/>
</dbReference>
<dbReference type="PANTHER" id="PTHR24412:SF451">
    <property type="entry name" value="KELCH-LIKE PROTEIN 20"/>
    <property type="match status" value="1"/>
</dbReference>
<dbReference type="Pfam" id="PF07707">
    <property type="entry name" value="BACK"/>
    <property type="match status" value="1"/>
</dbReference>
<dbReference type="Pfam" id="PF00651">
    <property type="entry name" value="BTB"/>
    <property type="match status" value="1"/>
</dbReference>
<dbReference type="Pfam" id="PF01344">
    <property type="entry name" value="Kelch_1"/>
    <property type="match status" value="6"/>
</dbReference>
<dbReference type="PIRSF" id="PIRSF037037">
    <property type="entry name" value="Kelch-like_protein_gigaxonin"/>
    <property type="match status" value="1"/>
</dbReference>
<dbReference type="SMART" id="SM00875">
    <property type="entry name" value="BACK"/>
    <property type="match status" value="1"/>
</dbReference>
<dbReference type="SMART" id="SM00225">
    <property type="entry name" value="BTB"/>
    <property type="match status" value="1"/>
</dbReference>
<dbReference type="SMART" id="SM00612">
    <property type="entry name" value="Kelch"/>
    <property type="match status" value="6"/>
</dbReference>
<dbReference type="SUPFAM" id="SSF50965">
    <property type="entry name" value="Galactose oxidase, central domain"/>
    <property type="match status" value="1"/>
</dbReference>
<dbReference type="SUPFAM" id="SSF117281">
    <property type="entry name" value="Kelch motif"/>
    <property type="match status" value="1"/>
</dbReference>
<dbReference type="SUPFAM" id="SSF54695">
    <property type="entry name" value="POZ domain"/>
    <property type="match status" value="1"/>
</dbReference>
<dbReference type="PROSITE" id="PS50097">
    <property type="entry name" value="BTB"/>
    <property type="match status" value="1"/>
</dbReference>
<accession>B4QLQ2</accession>
<name>KLHDB_DROSI</name>
<comment type="function">
    <text evidence="2 3">Probable substrate-specific adapter of an E3 ubiquitin-protein ligase complex which mediates the ubiquitination and subsequent proteasomal degradation of target proteins. May have a role in synapse differentiation and growth (By similarity).</text>
</comment>
<comment type="pathway">
    <text evidence="3">Protein modification; protein ubiquitination.</text>
</comment>
<reference evidence="7" key="1">
    <citation type="journal article" date="2007" name="Nature">
        <title>Evolution of genes and genomes on the Drosophila phylogeny.</title>
        <authorList>
            <consortium name="Drosophila 12 genomes consortium"/>
        </authorList>
    </citation>
    <scope>NUCLEOTIDE SEQUENCE [LARGE SCALE GENOMIC DNA]</scope>
</reference>
<proteinExistence type="inferred from homology"/>
<keyword id="KW-0009">Actin-binding</keyword>
<keyword id="KW-0880">Kelch repeat</keyword>
<keyword id="KW-0597">Phosphoprotein</keyword>
<keyword id="KW-1185">Reference proteome</keyword>
<keyword id="KW-0677">Repeat</keyword>
<keyword id="KW-0833">Ubl conjugation pathway</keyword>
<organism>
    <name type="scientific">Drosophila simulans</name>
    <name type="common">Fruit fly</name>
    <dbReference type="NCBI Taxonomy" id="7240"/>
    <lineage>
        <taxon>Eukaryota</taxon>
        <taxon>Metazoa</taxon>
        <taxon>Ecdysozoa</taxon>
        <taxon>Arthropoda</taxon>
        <taxon>Hexapoda</taxon>
        <taxon>Insecta</taxon>
        <taxon>Pterygota</taxon>
        <taxon>Neoptera</taxon>
        <taxon>Endopterygota</taxon>
        <taxon>Diptera</taxon>
        <taxon>Brachycera</taxon>
        <taxon>Muscomorpha</taxon>
        <taxon>Ephydroidea</taxon>
        <taxon>Drosophilidae</taxon>
        <taxon>Drosophila</taxon>
        <taxon>Sophophora</taxon>
    </lineage>
</organism>